<dbReference type="EMBL" id="CU329672">
    <property type="protein sequence ID" value="CAA22544.1"/>
    <property type="molecule type" value="Genomic_DNA"/>
</dbReference>
<dbReference type="PIR" id="T40895">
    <property type="entry name" value="T40895"/>
</dbReference>
<dbReference type="RefSeq" id="NP_588062.1">
    <property type="nucleotide sequence ID" value="NM_001023054.2"/>
</dbReference>
<dbReference type="SMR" id="O94706"/>
<dbReference type="BioGRID" id="275703">
    <property type="interactions" value="1"/>
</dbReference>
<dbReference type="FunCoup" id="O94706">
    <property type="interactions" value="102"/>
</dbReference>
<dbReference type="STRING" id="284812.O94706"/>
<dbReference type="iPTMnet" id="O94706"/>
<dbReference type="PaxDb" id="4896-SPCC1259.06.1"/>
<dbReference type="EnsemblFungi" id="SPCC1259.06.1">
    <property type="protein sequence ID" value="SPCC1259.06.1:pep"/>
    <property type="gene ID" value="SPCC1259.06"/>
</dbReference>
<dbReference type="GeneID" id="2539131"/>
<dbReference type="KEGG" id="spo:2539131"/>
<dbReference type="PomBase" id="SPCC1259.06">
    <property type="gene designation" value="taf8"/>
</dbReference>
<dbReference type="VEuPathDB" id="FungiDB:SPCC1259.06"/>
<dbReference type="eggNOG" id="KOG4336">
    <property type="taxonomic scope" value="Eukaryota"/>
</dbReference>
<dbReference type="HOGENOM" id="CLU_1246004_0_0_1"/>
<dbReference type="InParanoid" id="O94706"/>
<dbReference type="OMA" id="NWESQKW"/>
<dbReference type="PhylomeDB" id="O94706"/>
<dbReference type="PRO" id="PR:O94706"/>
<dbReference type="Proteomes" id="UP000002485">
    <property type="component" value="Chromosome III"/>
</dbReference>
<dbReference type="GO" id="GO:0005669">
    <property type="term" value="C:transcription factor TFIID complex"/>
    <property type="evidence" value="ECO:0000314"/>
    <property type="project" value="PomBase"/>
</dbReference>
<dbReference type="GO" id="GO:0046982">
    <property type="term" value="F:protein heterodimerization activity"/>
    <property type="evidence" value="ECO:0007669"/>
    <property type="project" value="InterPro"/>
</dbReference>
<dbReference type="GO" id="GO:0016251">
    <property type="term" value="F:RNA polymerase II general transcription initiation factor activity"/>
    <property type="evidence" value="ECO:0000269"/>
    <property type="project" value="PomBase"/>
</dbReference>
<dbReference type="GO" id="GO:0006366">
    <property type="term" value="P:transcription by RNA polymerase II"/>
    <property type="evidence" value="ECO:0000318"/>
    <property type="project" value="GO_Central"/>
</dbReference>
<dbReference type="GO" id="GO:0006367">
    <property type="term" value="P:transcription initiation at RNA polymerase II promoter"/>
    <property type="evidence" value="ECO:0000269"/>
    <property type="project" value="PomBase"/>
</dbReference>
<dbReference type="CDD" id="cd00076">
    <property type="entry name" value="HFD_SF"/>
    <property type="match status" value="1"/>
</dbReference>
<dbReference type="CDD" id="cd08049">
    <property type="entry name" value="TAF8"/>
    <property type="match status" value="1"/>
</dbReference>
<dbReference type="Gene3D" id="1.10.20.10">
    <property type="entry name" value="Histone, subunit A"/>
    <property type="match status" value="1"/>
</dbReference>
<dbReference type="InterPro" id="IPR009072">
    <property type="entry name" value="Histone-fold"/>
</dbReference>
<dbReference type="InterPro" id="IPR037818">
    <property type="entry name" value="TAF8"/>
</dbReference>
<dbReference type="InterPro" id="IPR019473">
    <property type="entry name" value="TFIID_su8_C"/>
</dbReference>
<dbReference type="PANTHER" id="PTHR46469">
    <property type="entry name" value="TRANSCRIPTION INITIATION FACTOR TFIID SUBUNIT 8"/>
    <property type="match status" value="1"/>
</dbReference>
<dbReference type="PANTHER" id="PTHR46469:SF1">
    <property type="entry name" value="TRANSCRIPTION INITIATION FACTOR TFIID SUBUNIT 8"/>
    <property type="match status" value="1"/>
</dbReference>
<dbReference type="Pfam" id="PF10406">
    <property type="entry name" value="TAF8_C"/>
    <property type="match status" value="1"/>
</dbReference>
<evidence type="ECO:0000250" key="1"/>
<evidence type="ECO:0000305" key="2"/>
<feature type="chain" id="PRO_0000343160" description="Transcription initiation factor TFIID subunit 8">
    <location>
        <begin position="1"/>
        <end position="222"/>
    </location>
</feature>
<reference key="1">
    <citation type="journal article" date="2002" name="Nature">
        <title>The genome sequence of Schizosaccharomyces pombe.</title>
        <authorList>
            <person name="Wood V."/>
            <person name="Gwilliam R."/>
            <person name="Rajandream M.A."/>
            <person name="Lyne M.H."/>
            <person name="Lyne R."/>
            <person name="Stewart A."/>
            <person name="Sgouros J.G."/>
            <person name="Peat N."/>
            <person name="Hayles J."/>
            <person name="Baker S.G."/>
            <person name="Basham D."/>
            <person name="Bowman S."/>
            <person name="Brooks K."/>
            <person name="Brown D."/>
            <person name="Brown S."/>
            <person name="Chillingworth T."/>
            <person name="Churcher C.M."/>
            <person name="Collins M."/>
            <person name="Connor R."/>
            <person name="Cronin A."/>
            <person name="Davis P."/>
            <person name="Feltwell T."/>
            <person name="Fraser A."/>
            <person name="Gentles S."/>
            <person name="Goble A."/>
            <person name="Hamlin N."/>
            <person name="Harris D.E."/>
            <person name="Hidalgo J."/>
            <person name="Hodgson G."/>
            <person name="Holroyd S."/>
            <person name="Hornsby T."/>
            <person name="Howarth S."/>
            <person name="Huckle E.J."/>
            <person name="Hunt S."/>
            <person name="Jagels K."/>
            <person name="James K.D."/>
            <person name="Jones L."/>
            <person name="Jones M."/>
            <person name="Leather S."/>
            <person name="McDonald S."/>
            <person name="McLean J."/>
            <person name="Mooney P."/>
            <person name="Moule S."/>
            <person name="Mungall K.L."/>
            <person name="Murphy L.D."/>
            <person name="Niblett D."/>
            <person name="Odell C."/>
            <person name="Oliver K."/>
            <person name="O'Neil S."/>
            <person name="Pearson D."/>
            <person name="Quail M.A."/>
            <person name="Rabbinowitsch E."/>
            <person name="Rutherford K.M."/>
            <person name="Rutter S."/>
            <person name="Saunders D."/>
            <person name="Seeger K."/>
            <person name="Sharp S."/>
            <person name="Skelton J."/>
            <person name="Simmonds M.N."/>
            <person name="Squares R."/>
            <person name="Squares S."/>
            <person name="Stevens K."/>
            <person name="Taylor K."/>
            <person name="Taylor R.G."/>
            <person name="Tivey A."/>
            <person name="Walsh S.V."/>
            <person name="Warren T."/>
            <person name="Whitehead S."/>
            <person name="Woodward J.R."/>
            <person name="Volckaert G."/>
            <person name="Aert R."/>
            <person name="Robben J."/>
            <person name="Grymonprez B."/>
            <person name="Weltjens I."/>
            <person name="Vanstreels E."/>
            <person name="Rieger M."/>
            <person name="Schaefer M."/>
            <person name="Mueller-Auer S."/>
            <person name="Gabel C."/>
            <person name="Fuchs M."/>
            <person name="Duesterhoeft A."/>
            <person name="Fritzc C."/>
            <person name="Holzer E."/>
            <person name="Moestl D."/>
            <person name="Hilbert H."/>
            <person name="Borzym K."/>
            <person name="Langer I."/>
            <person name="Beck A."/>
            <person name="Lehrach H."/>
            <person name="Reinhardt R."/>
            <person name="Pohl T.M."/>
            <person name="Eger P."/>
            <person name="Zimmermann W."/>
            <person name="Wedler H."/>
            <person name="Wambutt R."/>
            <person name="Purnelle B."/>
            <person name="Goffeau A."/>
            <person name="Cadieu E."/>
            <person name="Dreano S."/>
            <person name="Gloux S."/>
            <person name="Lelaure V."/>
            <person name="Mottier S."/>
            <person name="Galibert F."/>
            <person name="Aves S.J."/>
            <person name="Xiang Z."/>
            <person name="Hunt C."/>
            <person name="Moore K."/>
            <person name="Hurst S.M."/>
            <person name="Lucas M."/>
            <person name="Rochet M."/>
            <person name="Gaillardin C."/>
            <person name="Tallada V.A."/>
            <person name="Garzon A."/>
            <person name="Thode G."/>
            <person name="Daga R.R."/>
            <person name="Cruzado L."/>
            <person name="Jimenez J."/>
            <person name="Sanchez M."/>
            <person name="del Rey F."/>
            <person name="Benito J."/>
            <person name="Dominguez A."/>
            <person name="Revuelta J.L."/>
            <person name="Moreno S."/>
            <person name="Armstrong J."/>
            <person name="Forsburg S.L."/>
            <person name="Cerutti L."/>
            <person name="Lowe T."/>
            <person name="McCombie W.R."/>
            <person name="Paulsen I."/>
            <person name="Potashkin J."/>
            <person name="Shpakovski G.V."/>
            <person name="Ussery D."/>
            <person name="Barrell B.G."/>
            <person name="Nurse P."/>
        </authorList>
    </citation>
    <scope>NUCLEOTIDE SEQUENCE [LARGE SCALE GENOMIC DNA]</scope>
    <source>
        <strain>972 / ATCC 24843</strain>
    </source>
</reference>
<sequence length="222" mass="25004">MEAVIANILQQLGFDSMTKAAEASFVEAVDKYLRNSFRELALHTQLSKHTIPTTKDVALWLNLLNIPMSSLQTELEKYLKPLPPAINDELDRLANESQDIPSKFKSSLDSKMVSQLLGSLAVSQNRPAYVVNHLPPFPASHTYMATPVYPVRPTSPKQIRELATQESRLAEHALRKILNVNQPRSADSPRHASFEKACSELNLDVSSFHLVNWESQKWSSQR</sequence>
<keyword id="KW-0539">Nucleus</keyword>
<keyword id="KW-1185">Reference proteome</keyword>
<keyword id="KW-0804">Transcription</keyword>
<keyword id="KW-0805">Transcription regulation</keyword>
<comment type="function">
    <text evidence="1">Functions as a component of the DNA-binding general transcription factor complex TFIID. Binding of TFIID to a promoter (with or without TATA element) is the initial step in pre-initiation complex (PIC) formation. TFIID plays a key role in the regulation of gene expression by RNA polymerase II through different activities such as transcription activator interaction, core promoter recognition and selectivity, TFIIA and TFIIB interaction, chromatin modification, facilitation of DNA opening and initiation of transcription (By similarity).</text>
</comment>
<comment type="subunit">
    <text evidence="1">TFIID is composed of TATA binding protein (TBP) and a number of TBP-associated factors (TAFs).</text>
</comment>
<comment type="subcellular location">
    <subcellularLocation>
        <location evidence="1">Nucleus</location>
    </subcellularLocation>
</comment>
<comment type="similarity">
    <text evidence="2">Belongs to the TAF8 family.</text>
</comment>
<gene>
    <name type="primary">taf8</name>
    <name type="ORF">SPCC1259.06</name>
</gene>
<protein>
    <recommendedName>
        <fullName>Transcription initiation factor TFIID subunit 8</fullName>
    </recommendedName>
    <alternativeName>
        <fullName>TBP-associated factor 8</fullName>
    </alternativeName>
</protein>
<name>TAF8_SCHPO</name>
<organism>
    <name type="scientific">Schizosaccharomyces pombe (strain 972 / ATCC 24843)</name>
    <name type="common">Fission yeast</name>
    <dbReference type="NCBI Taxonomy" id="284812"/>
    <lineage>
        <taxon>Eukaryota</taxon>
        <taxon>Fungi</taxon>
        <taxon>Dikarya</taxon>
        <taxon>Ascomycota</taxon>
        <taxon>Taphrinomycotina</taxon>
        <taxon>Schizosaccharomycetes</taxon>
        <taxon>Schizosaccharomycetales</taxon>
        <taxon>Schizosaccharomycetaceae</taxon>
        <taxon>Schizosaccharomyces</taxon>
    </lineage>
</organism>
<proteinExistence type="inferred from homology"/>
<accession>O94706</accession>